<name>O166A_CONCL</name>
<proteinExistence type="inferred from homology"/>
<keyword id="KW-1015">Disulfide bond</keyword>
<keyword id="KW-0960">Knottin</keyword>
<keyword id="KW-0528">Neurotoxin</keyword>
<keyword id="KW-0964">Secreted</keyword>
<keyword id="KW-0732">Signal</keyword>
<keyword id="KW-0800">Toxin</keyword>
<feature type="signal peptide" evidence="2">
    <location>
        <begin position="1"/>
        <end position="24"/>
    </location>
</feature>
<feature type="propeptide" id="PRO_0000414981" evidence="1">
    <location>
        <begin position="25"/>
        <end position="37"/>
    </location>
</feature>
<feature type="peptide" id="PRO_0000414982" description="Conotoxin Cl6.6a">
    <location>
        <begin position="40"/>
        <end position="67"/>
    </location>
</feature>
<feature type="disulfide bond" evidence="1">
    <location>
        <begin position="43"/>
        <end position="57"/>
    </location>
</feature>
<feature type="disulfide bond" evidence="1">
    <location>
        <begin position="50"/>
        <end position="61"/>
    </location>
</feature>
<feature type="disulfide bond" evidence="1">
    <location>
        <begin position="56"/>
        <end position="65"/>
    </location>
</feature>
<organism>
    <name type="scientific">Californiconus californicus</name>
    <name type="common">California cone</name>
    <name type="synonym">Conus californicus</name>
    <dbReference type="NCBI Taxonomy" id="1736779"/>
    <lineage>
        <taxon>Eukaryota</taxon>
        <taxon>Metazoa</taxon>
        <taxon>Spiralia</taxon>
        <taxon>Lophotrochozoa</taxon>
        <taxon>Mollusca</taxon>
        <taxon>Gastropoda</taxon>
        <taxon>Caenogastropoda</taxon>
        <taxon>Neogastropoda</taxon>
        <taxon>Conoidea</taxon>
        <taxon>Conidae</taxon>
        <taxon>Californiconus</taxon>
    </lineage>
</organism>
<comment type="subcellular location">
    <subcellularLocation>
        <location evidence="1">Secreted</location>
    </subcellularLocation>
</comment>
<comment type="tissue specificity">
    <text>Expressed by the venom duct.</text>
</comment>
<comment type="domain">
    <text evidence="1">The presence of a 'disulfide through disulfide knot' structurally defines this protein as a knottin.</text>
</comment>
<comment type="domain">
    <text>The cysteine framework is VI/VII (C-C-CC-C-C).</text>
</comment>
<comment type="similarity">
    <text evidence="3">Belongs to the conotoxin O1 superfamily.</text>
</comment>
<sequence length="67" mass="7286">MKLTCVLIAAVLLLAVCQLDSADATGYMRKNPSLRSPKRTRGCKSKGSFCWNGIECCGGNCFFACIY</sequence>
<reference key="1">
    <citation type="journal article" date="2010" name="Mol. Phylogenet. Evol.">
        <title>Evolution of Conus peptide toxins: analysis of Conus californicus Reeve, 1844.</title>
        <authorList>
            <person name="Biggs J.S."/>
            <person name="Watkins M."/>
            <person name="Puillandre N."/>
            <person name="Ownby J.P."/>
            <person name="Lopez-Vera E."/>
            <person name="Christensen S."/>
            <person name="Moreno K.J."/>
            <person name="Bernaldez J."/>
            <person name="Licea-Navarro A."/>
            <person name="Corneli P.S."/>
            <person name="Olivera B.M."/>
        </authorList>
    </citation>
    <scope>NUCLEOTIDE SEQUENCE [GENOMIC DNA]</scope>
</reference>
<accession>D6C4L3</accession>
<dbReference type="EMBL" id="FJ959155">
    <property type="protein sequence ID" value="ADB93125.1"/>
    <property type="molecule type" value="Genomic_DNA"/>
</dbReference>
<dbReference type="SMR" id="D6C4L3"/>
<dbReference type="ConoServer" id="4039">
    <property type="toxin name" value="Cal6.6a precursor"/>
</dbReference>
<dbReference type="GO" id="GO:0005576">
    <property type="term" value="C:extracellular region"/>
    <property type="evidence" value="ECO:0007669"/>
    <property type="project" value="UniProtKB-SubCell"/>
</dbReference>
<dbReference type="GO" id="GO:0008200">
    <property type="term" value="F:ion channel inhibitor activity"/>
    <property type="evidence" value="ECO:0007669"/>
    <property type="project" value="InterPro"/>
</dbReference>
<dbReference type="GO" id="GO:0090729">
    <property type="term" value="F:toxin activity"/>
    <property type="evidence" value="ECO:0007669"/>
    <property type="project" value="UniProtKB-KW"/>
</dbReference>
<dbReference type="InterPro" id="IPR004214">
    <property type="entry name" value="Conotoxin"/>
</dbReference>
<dbReference type="Pfam" id="PF02950">
    <property type="entry name" value="Conotoxin"/>
    <property type="match status" value="1"/>
</dbReference>
<protein>
    <recommendedName>
        <fullName>Conotoxin Cl6.6a</fullName>
    </recommendedName>
</protein>
<evidence type="ECO:0000250" key="1"/>
<evidence type="ECO:0000255" key="2"/>
<evidence type="ECO:0000305" key="3"/>